<evidence type="ECO:0000255" key="1">
    <source>
        <dbReference type="HAMAP-Rule" id="MF_01371"/>
    </source>
</evidence>
<evidence type="ECO:0000305" key="2"/>
<gene>
    <name evidence="1" type="primary">rpmD</name>
    <name type="ordered locus">Mmcs_1033</name>
</gene>
<keyword id="KW-0687">Ribonucleoprotein</keyword>
<keyword id="KW-0689">Ribosomal protein</keyword>
<reference key="1">
    <citation type="submission" date="2006-06" db="EMBL/GenBank/DDBJ databases">
        <title>Complete sequence of chromosome of Mycobacterium sp. MCS.</title>
        <authorList>
            <consortium name="US DOE Joint Genome Institute"/>
            <person name="Copeland A."/>
            <person name="Lucas S."/>
            <person name="Lapidus A."/>
            <person name="Barry K."/>
            <person name="Detter J.C."/>
            <person name="Glavina del Rio T."/>
            <person name="Hammon N."/>
            <person name="Israni S."/>
            <person name="Dalin E."/>
            <person name="Tice H."/>
            <person name="Pitluck S."/>
            <person name="Martinez M."/>
            <person name="Schmutz J."/>
            <person name="Larimer F."/>
            <person name="Land M."/>
            <person name="Hauser L."/>
            <person name="Kyrpides N."/>
            <person name="Kim E."/>
            <person name="Miller C.D."/>
            <person name="Hughes J.E."/>
            <person name="Anderson A.J."/>
            <person name="Sims R.C."/>
            <person name="Richardson P."/>
        </authorList>
    </citation>
    <scope>NUCLEOTIDE SEQUENCE [LARGE SCALE GENOMIC DNA]</scope>
    <source>
        <strain>MCS</strain>
    </source>
</reference>
<organism>
    <name type="scientific">Mycobacterium sp. (strain MCS)</name>
    <dbReference type="NCBI Taxonomy" id="164756"/>
    <lineage>
        <taxon>Bacteria</taxon>
        <taxon>Bacillati</taxon>
        <taxon>Actinomycetota</taxon>
        <taxon>Actinomycetes</taxon>
        <taxon>Mycobacteriales</taxon>
        <taxon>Mycobacteriaceae</taxon>
        <taxon>Mycobacterium</taxon>
    </lineage>
</organism>
<accession>Q1BD87</accession>
<proteinExistence type="inferred from homology"/>
<feature type="chain" id="PRO_0000347122" description="Large ribosomal subunit protein uL30">
    <location>
        <begin position="1"/>
        <end position="61"/>
    </location>
</feature>
<dbReference type="EMBL" id="CP000384">
    <property type="protein sequence ID" value="ABG07147.1"/>
    <property type="molecule type" value="Genomic_DNA"/>
</dbReference>
<dbReference type="SMR" id="Q1BD87"/>
<dbReference type="KEGG" id="mmc:Mmcs_1033"/>
<dbReference type="HOGENOM" id="CLU_131047_2_0_11"/>
<dbReference type="GO" id="GO:0022625">
    <property type="term" value="C:cytosolic large ribosomal subunit"/>
    <property type="evidence" value="ECO:0007669"/>
    <property type="project" value="TreeGrafter"/>
</dbReference>
<dbReference type="GO" id="GO:0003735">
    <property type="term" value="F:structural constituent of ribosome"/>
    <property type="evidence" value="ECO:0007669"/>
    <property type="project" value="InterPro"/>
</dbReference>
<dbReference type="GO" id="GO:0006412">
    <property type="term" value="P:translation"/>
    <property type="evidence" value="ECO:0007669"/>
    <property type="project" value="UniProtKB-UniRule"/>
</dbReference>
<dbReference type="CDD" id="cd01658">
    <property type="entry name" value="Ribosomal_L30"/>
    <property type="match status" value="1"/>
</dbReference>
<dbReference type="FunFam" id="3.30.1390.20:FF:000001">
    <property type="entry name" value="50S ribosomal protein L30"/>
    <property type="match status" value="1"/>
</dbReference>
<dbReference type="Gene3D" id="3.30.1390.20">
    <property type="entry name" value="Ribosomal protein L30, ferredoxin-like fold domain"/>
    <property type="match status" value="1"/>
</dbReference>
<dbReference type="HAMAP" id="MF_01371_B">
    <property type="entry name" value="Ribosomal_uL30_B"/>
    <property type="match status" value="1"/>
</dbReference>
<dbReference type="InterPro" id="IPR036919">
    <property type="entry name" value="Ribo_uL30_ferredoxin-like_sf"/>
</dbReference>
<dbReference type="InterPro" id="IPR005996">
    <property type="entry name" value="Ribosomal_uL30_bac-type"/>
</dbReference>
<dbReference type="InterPro" id="IPR018038">
    <property type="entry name" value="Ribosomal_uL30_CS"/>
</dbReference>
<dbReference type="InterPro" id="IPR016082">
    <property type="entry name" value="Ribosomal_uL30_ferredoxin-like"/>
</dbReference>
<dbReference type="NCBIfam" id="TIGR01308">
    <property type="entry name" value="rpmD_bact"/>
    <property type="match status" value="1"/>
</dbReference>
<dbReference type="PANTHER" id="PTHR15892:SF2">
    <property type="entry name" value="LARGE RIBOSOMAL SUBUNIT PROTEIN UL30M"/>
    <property type="match status" value="1"/>
</dbReference>
<dbReference type="PANTHER" id="PTHR15892">
    <property type="entry name" value="MITOCHONDRIAL RIBOSOMAL PROTEIN L30"/>
    <property type="match status" value="1"/>
</dbReference>
<dbReference type="Pfam" id="PF00327">
    <property type="entry name" value="Ribosomal_L30"/>
    <property type="match status" value="1"/>
</dbReference>
<dbReference type="PIRSF" id="PIRSF002211">
    <property type="entry name" value="Ribosomal_L30_bac-type"/>
    <property type="match status" value="1"/>
</dbReference>
<dbReference type="SUPFAM" id="SSF55129">
    <property type="entry name" value="Ribosomal protein L30p/L7e"/>
    <property type="match status" value="1"/>
</dbReference>
<dbReference type="PROSITE" id="PS00634">
    <property type="entry name" value="RIBOSOMAL_L30"/>
    <property type="match status" value="1"/>
</dbReference>
<comment type="subunit">
    <text evidence="1">Part of the 50S ribosomal subunit.</text>
</comment>
<comment type="similarity">
    <text evidence="1">Belongs to the universal ribosomal protein uL30 family.</text>
</comment>
<sequence length="61" mass="7047">MIMAELKIIQVRGTIGARWNQRESLRTLGLRKIRQSVVREDNAQTRGLIKTVHHLVVVEEV</sequence>
<name>RL30_MYCSS</name>
<protein>
    <recommendedName>
        <fullName evidence="1">Large ribosomal subunit protein uL30</fullName>
    </recommendedName>
    <alternativeName>
        <fullName evidence="2">50S ribosomal protein L30</fullName>
    </alternativeName>
</protein>